<proteinExistence type="inferred from homology"/>
<evidence type="ECO:0000255" key="1">
    <source>
        <dbReference type="HAMAP-Rule" id="MF_00059"/>
    </source>
</evidence>
<dbReference type="EC" id="2.7.7.6" evidence="1"/>
<dbReference type="EMBL" id="CP000437">
    <property type="protein sequence ID" value="ABI82578.1"/>
    <property type="molecule type" value="Genomic_DNA"/>
</dbReference>
<dbReference type="RefSeq" id="WP_003015012.1">
    <property type="nucleotide sequence ID" value="NC_017463.1"/>
</dbReference>
<dbReference type="SMR" id="Q0BMV6"/>
<dbReference type="KEGG" id="fth:FTH_0618"/>
<dbReference type="GO" id="GO:0005737">
    <property type="term" value="C:cytoplasm"/>
    <property type="evidence" value="ECO:0007669"/>
    <property type="project" value="UniProtKB-ARBA"/>
</dbReference>
<dbReference type="GO" id="GO:0000428">
    <property type="term" value="C:DNA-directed RNA polymerase complex"/>
    <property type="evidence" value="ECO:0007669"/>
    <property type="project" value="UniProtKB-KW"/>
</dbReference>
<dbReference type="GO" id="GO:0003677">
    <property type="term" value="F:DNA binding"/>
    <property type="evidence" value="ECO:0007669"/>
    <property type="project" value="UniProtKB-UniRule"/>
</dbReference>
<dbReference type="GO" id="GO:0003899">
    <property type="term" value="F:DNA-directed RNA polymerase activity"/>
    <property type="evidence" value="ECO:0007669"/>
    <property type="project" value="UniProtKB-UniRule"/>
</dbReference>
<dbReference type="GO" id="GO:0046983">
    <property type="term" value="F:protein dimerization activity"/>
    <property type="evidence" value="ECO:0007669"/>
    <property type="project" value="InterPro"/>
</dbReference>
<dbReference type="GO" id="GO:0006351">
    <property type="term" value="P:DNA-templated transcription"/>
    <property type="evidence" value="ECO:0007669"/>
    <property type="project" value="UniProtKB-UniRule"/>
</dbReference>
<dbReference type="FunFam" id="1.10.150.20:FF:000001">
    <property type="entry name" value="DNA-directed RNA polymerase subunit alpha"/>
    <property type="match status" value="1"/>
</dbReference>
<dbReference type="Gene3D" id="1.10.150.20">
    <property type="entry name" value="5' to 3' exonuclease, C-terminal subdomain"/>
    <property type="match status" value="1"/>
</dbReference>
<dbReference type="Gene3D" id="2.170.120.12">
    <property type="entry name" value="DNA-directed RNA polymerase, insert domain"/>
    <property type="match status" value="1"/>
</dbReference>
<dbReference type="Gene3D" id="3.30.1360.10">
    <property type="entry name" value="RNA polymerase, RBP11-like subunit"/>
    <property type="match status" value="1"/>
</dbReference>
<dbReference type="HAMAP" id="MF_00059">
    <property type="entry name" value="RNApol_bact_RpoA"/>
    <property type="match status" value="1"/>
</dbReference>
<dbReference type="InterPro" id="IPR011262">
    <property type="entry name" value="DNA-dir_RNA_pol_insert"/>
</dbReference>
<dbReference type="InterPro" id="IPR011263">
    <property type="entry name" value="DNA-dir_RNA_pol_RpoA/D/Rpb3"/>
</dbReference>
<dbReference type="InterPro" id="IPR011773">
    <property type="entry name" value="DNA-dir_RpoA"/>
</dbReference>
<dbReference type="InterPro" id="IPR036603">
    <property type="entry name" value="RBP11-like"/>
</dbReference>
<dbReference type="InterPro" id="IPR011260">
    <property type="entry name" value="RNAP_asu_C"/>
</dbReference>
<dbReference type="InterPro" id="IPR036643">
    <property type="entry name" value="RNApol_insert_sf"/>
</dbReference>
<dbReference type="NCBIfam" id="NF003513">
    <property type="entry name" value="PRK05182.1-2"/>
    <property type="match status" value="1"/>
</dbReference>
<dbReference type="NCBIfam" id="TIGR02027">
    <property type="entry name" value="rpoA"/>
    <property type="match status" value="1"/>
</dbReference>
<dbReference type="Pfam" id="PF01000">
    <property type="entry name" value="RNA_pol_A_bac"/>
    <property type="match status" value="1"/>
</dbReference>
<dbReference type="Pfam" id="PF03118">
    <property type="entry name" value="RNA_pol_A_CTD"/>
    <property type="match status" value="1"/>
</dbReference>
<dbReference type="Pfam" id="PF01193">
    <property type="entry name" value="RNA_pol_L"/>
    <property type="match status" value="1"/>
</dbReference>
<dbReference type="SMART" id="SM00662">
    <property type="entry name" value="RPOLD"/>
    <property type="match status" value="1"/>
</dbReference>
<dbReference type="SUPFAM" id="SSF47789">
    <property type="entry name" value="C-terminal domain of RNA polymerase alpha subunit"/>
    <property type="match status" value="1"/>
</dbReference>
<dbReference type="SUPFAM" id="SSF56553">
    <property type="entry name" value="Insert subdomain of RNA polymerase alpha subunit"/>
    <property type="match status" value="1"/>
</dbReference>
<dbReference type="SUPFAM" id="SSF55257">
    <property type="entry name" value="RBP11-like subunits of RNA polymerase"/>
    <property type="match status" value="1"/>
</dbReference>
<protein>
    <recommendedName>
        <fullName evidence="1">DNA-directed RNA polymerase subunit alpha 2</fullName>
        <shortName evidence="1">RNAP subunit alpha 2</shortName>
        <ecNumber evidence="1">2.7.7.6</ecNumber>
    </recommendedName>
    <alternativeName>
        <fullName evidence="1">RNA polymerase subunit alpha 2</fullName>
    </alternativeName>
    <alternativeName>
        <fullName evidence="1">Transcriptase subunit alpha 2</fullName>
    </alternativeName>
</protein>
<name>RPOA2_FRATO</name>
<gene>
    <name evidence="1" type="primary">rpoA2</name>
    <name type="ordered locus">FTH_0618</name>
</gene>
<accession>Q0BMV6</accession>
<keyword id="KW-0240">DNA-directed RNA polymerase</keyword>
<keyword id="KW-0548">Nucleotidyltransferase</keyword>
<keyword id="KW-0804">Transcription</keyword>
<keyword id="KW-0808">Transferase</keyword>
<comment type="function">
    <text evidence="1">DNA-dependent RNA polymerase catalyzes the transcription of DNA into RNA using the four ribonucleoside triphosphates as substrates.</text>
</comment>
<comment type="catalytic activity">
    <reaction evidence="1">
        <text>RNA(n) + a ribonucleoside 5'-triphosphate = RNA(n+1) + diphosphate</text>
        <dbReference type="Rhea" id="RHEA:21248"/>
        <dbReference type="Rhea" id="RHEA-COMP:14527"/>
        <dbReference type="Rhea" id="RHEA-COMP:17342"/>
        <dbReference type="ChEBI" id="CHEBI:33019"/>
        <dbReference type="ChEBI" id="CHEBI:61557"/>
        <dbReference type="ChEBI" id="CHEBI:140395"/>
        <dbReference type="EC" id="2.7.7.6"/>
    </reaction>
</comment>
<comment type="subunit">
    <text evidence="1">Homodimer. The RNAP catalytic core consists of 2 alpha, 1 beta, 1 beta' and 1 omega subunit. When a sigma factor is associated with the core the holoenzyme is formed, which can initiate transcription.</text>
</comment>
<comment type="domain">
    <text evidence="1">The N-terminal domain is essential for RNAP assembly and basal transcription, whereas the C-terminal domain is involved in interaction with transcriptional regulators and with upstream promoter elements.</text>
</comment>
<comment type="similarity">
    <text evidence="1">Belongs to the RNA polymerase alpha chain family.</text>
</comment>
<reference key="1">
    <citation type="journal article" date="2006" name="J. Bacteriol.">
        <title>Chromosome rearrangement and diversification of Francisella tularensis revealed by the type B (OSU18) genome sequence.</title>
        <authorList>
            <person name="Petrosino J.F."/>
            <person name="Xiang Q."/>
            <person name="Karpathy S.E."/>
            <person name="Jiang H."/>
            <person name="Yerrapragada S."/>
            <person name="Liu Y."/>
            <person name="Gioia J."/>
            <person name="Hemphill L."/>
            <person name="Gonzalez A."/>
            <person name="Raghavan T.M."/>
            <person name="Uzman A."/>
            <person name="Fox G.E."/>
            <person name="Highlander S."/>
            <person name="Reichard M."/>
            <person name="Morton R.J."/>
            <person name="Clinkenbeard K.D."/>
            <person name="Weinstock G.M."/>
        </authorList>
    </citation>
    <scope>NUCLEOTIDE SEQUENCE [LARGE SCALE GENOMIC DNA]</scope>
    <source>
        <strain>OSU18</strain>
    </source>
</reference>
<organism>
    <name type="scientific">Francisella tularensis subsp. holarctica (strain OSU18)</name>
    <dbReference type="NCBI Taxonomy" id="393011"/>
    <lineage>
        <taxon>Bacteria</taxon>
        <taxon>Pseudomonadati</taxon>
        <taxon>Pseudomonadota</taxon>
        <taxon>Gammaproteobacteria</taxon>
        <taxon>Thiotrichales</taxon>
        <taxon>Francisellaceae</taxon>
        <taxon>Francisella</taxon>
    </lineage>
</organism>
<feature type="chain" id="PRO_0000296805" description="DNA-directed RNA polymerase subunit alpha 2">
    <location>
        <begin position="1"/>
        <end position="317"/>
    </location>
</feature>
<feature type="region of interest" description="Alpha N-terminal domain (alpha-NTD)" evidence="1">
    <location>
        <begin position="1"/>
        <end position="227"/>
    </location>
</feature>
<feature type="region of interest" description="Alpha C-terminal domain (alpha-CTD)" evidence="1">
    <location>
        <begin position="241"/>
        <end position="317"/>
    </location>
</feature>
<sequence>MALENLLHPTNIKIDEYAKNATKFSFEALERGVGYTLGFALKQTMLYSIAGACVTSIKINDGKVTSLEDVIPCDETVADIILNVKSLSVTLAEDVETGTITFELSGSEEEIFSEEAKLSEGLAITEEVFICSYNGGKKLKIEAKVEKGVGFRPAQDNFKDGEFLLDATFSPVVFCDFEIKDARVGRRTDLDKLELNIKTNGNVNCEEALRLAATKIQNQLRNIVDIEEINKGIFVEDPKDINPILLKHVEELNLTARSSNCLKAVNIRLIGELVQKTENELLKAPNFGKKSLTEIKDKLSELGLSLGTLIENWPQDL</sequence>